<evidence type="ECO:0000255" key="1">
    <source>
        <dbReference type="HAMAP-Rule" id="MF_00518"/>
    </source>
</evidence>
<dbReference type="EC" id="3.1.1.96" evidence="1"/>
<dbReference type="EMBL" id="CP000720">
    <property type="protein sequence ID" value="ABS47841.1"/>
    <property type="molecule type" value="Genomic_DNA"/>
</dbReference>
<dbReference type="RefSeq" id="WP_002209009.1">
    <property type="nucleotide sequence ID" value="NC_009708.1"/>
</dbReference>
<dbReference type="SMR" id="A7FCQ4"/>
<dbReference type="GeneID" id="57974561"/>
<dbReference type="KEGG" id="ypi:YpsIP31758_0031"/>
<dbReference type="HOGENOM" id="CLU_076901_1_0_6"/>
<dbReference type="Proteomes" id="UP000002412">
    <property type="component" value="Chromosome"/>
</dbReference>
<dbReference type="GO" id="GO:0005737">
    <property type="term" value="C:cytoplasm"/>
    <property type="evidence" value="ECO:0007669"/>
    <property type="project" value="UniProtKB-SubCell"/>
</dbReference>
<dbReference type="GO" id="GO:0051500">
    <property type="term" value="F:D-tyrosyl-tRNA(Tyr) deacylase activity"/>
    <property type="evidence" value="ECO:0007669"/>
    <property type="project" value="TreeGrafter"/>
</dbReference>
<dbReference type="GO" id="GO:0106026">
    <property type="term" value="F:Gly-tRNA(Ala) deacylase activity"/>
    <property type="evidence" value="ECO:0007669"/>
    <property type="project" value="UniProtKB-UniRule"/>
</dbReference>
<dbReference type="GO" id="GO:0043908">
    <property type="term" value="F:Ser(Gly)-tRNA(Ala) hydrolase activity"/>
    <property type="evidence" value="ECO:0007669"/>
    <property type="project" value="UniProtKB-UniRule"/>
</dbReference>
<dbReference type="GO" id="GO:0000049">
    <property type="term" value="F:tRNA binding"/>
    <property type="evidence" value="ECO:0007669"/>
    <property type="project" value="UniProtKB-UniRule"/>
</dbReference>
<dbReference type="GO" id="GO:0019478">
    <property type="term" value="P:D-amino acid catabolic process"/>
    <property type="evidence" value="ECO:0007669"/>
    <property type="project" value="UniProtKB-UniRule"/>
</dbReference>
<dbReference type="CDD" id="cd00563">
    <property type="entry name" value="Dtyr_deacylase"/>
    <property type="match status" value="1"/>
</dbReference>
<dbReference type="FunFam" id="3.50.80.10:FF:000001">
    <property type="entry name" value="D-aminoacyl-tRNA deacylase"/>
    <property type="match status" value="1"/>
</dbReference>
<dbReference type="Gene3D" id="3.50.80.10">
    <property type="entry name" value="D-tyrosyl-tRNA(Tyr) deacylase"/>
    <property type="match status" value="1"/>
</dbReference>
<dbReference type="HAMAP" id="MF_00518">
    <property type="entry name" value="Deacylase_Dtd"/>
    <property type="match status" value="1"/>
</dbReference>
<dbReference type="InterPro" id="IPR003732">
    <property type="entry name" value="Daa-tRNA_deacyls_DTD"/>
</dbReference>
<dbReference type="InterPro" id="IPR023509">
    <property type="entry name" value="DTD-like_sf"/>
</dbReference>
<dbReference type="NCBIfam" id="TIGR00256">
    <property type="entry name" value="D-aminoacyl-tRNA deacylase"/>
    <property type="match status" value="1"/>
</dbReference>
<dbReference type="PANTHER" id="PTHR10472:SF5">
    <property type="entry name" value="D-AMINOACYL-TRNA DEACYLASE 1"/>
    <property type="match status" value="1"/>
</dbReference>
<dbReference type="PANTHER" id="PTHR10472">
    <property type="entry name" value="D-TYROSYL-TRNA TYR DEACYLASE"/>
    <property type="match status" value="1"/>
</dbReference>
<dbReference type="Pfam" id="PF02580">
    <property type="entry name" value="Tyr_Deacylase"/>
    <property type="match status" value="1"/>
</dbReference>
<dbReference type="SUPFAM" id="SSF69500">
    <property type="entry name" value="DTD-like"/>
    <property type="match status" value="1"/>
</dbReference>
<comment type="function">
    <text evidence="1">An aminoacyl-tRNA editing enzyme that deacylates mischarged D-aminoacyl-tRNAs. Also deacylates mischarged glycyl-tRNA(Ala), protecting cells against glycine mischarging by AlaRS. Acts via tRNA-based rather than protein-based catalysis; rejects L-amino acids rather than detecting D-amino acids in the active site. By recycling D-aminoacyl-tRNA to D-amino acids and free tRNA molecules, this enzyme counteracts the toxicity associated with the formation of D-aminoacyl-tRNA entities in vivo and helps enforce protein L-homochirality.</text>
</comment>
<comment type="catalytic activity">
    <reaction evidence="1">
        <text>glycyl-tRNA(Ala) + H2O = tRNA(Ala) + glycine + H(+)</text>
        <dbReference type="Rhea" id="RHEA:53744"/>
        <dbReference type="Rhea" id="RHEA-COMP:9657"/>
        <dbReference type="Rhea" id="RHEA-COMP:13640"/>
        <dbReference type="ChEBI" id="CHEBI:15377"/>
        <dbReference type="ChEBI" id="CHEBI:15378"/>
        <dbReference type="ChEBI" id="CHEBI:57305"/>
        <dbReference type="ChEBI" id="CHEBI:78442"/>
        <dbReference type="ChEBI" id="CHEBI:78522"/>
        <dbReference type="EC" id="3.1.1.96"/>
    </reaction>
</comment>
<comment type="catalytic activity">
    <reaction evidence="1">
        <text>a D-aminoacyl-tRNA + H2O = a tRNA + a D-alpha-amino acid + H(+)</text>
        <dbReference type="Rhea" id="RHEA:13953"/>
        <dbReference type="Rhea" id="RHEA-COMP:10123"/>
        <dbReference type="Rhea" id="RHEA-COMP:10124"/>
        <dbReference type="ChEBI" id="CHEBI:15377"/>
        <dbReference type="ChEBI" id="CHEBI:15378"/>
        <dbReference type="ChEBI" id="CHEBI:59871"/>
        <dbReference type="ChEBI" id="CHEBI:78442"/>
        <dbReference type="ChEBI" id="CHEBI:79333"/>
        <dbReference type="EC" id="3.1.1.96"/>
    </reaction>
</comment>
<comment type="subunit">
    <text evidence="1">Homodimer.</text>
</comment>
<comment type="subcellular location">
    <subcellularLocation>
        <location evidence="1">Cytoplasm</location>
    </subcellularLocation>
</comment>
<comment type="domain">
    <text evidence="1">A Gly-cisPro motif from one monomer fits into the active site of the other monomer to allow specific chiral rejection of L-amino acids.</text>
</comment>
<comment type="similarity">
    <text evidence="1">Belongs to the DTD family.</text>
</comment>
<proteinExistence type="inferred from homology"/>
<gene>
    <name evidence="1" type="primary">dtd</name>
    <name type="ordered locus">YpsIP31758_0031</name>
</gene>
<reference key="1">
    <citation type="journal article" date="2007" name="PLoS Genet.">
        <title>The complete genome sequence of Yersinia pseudotuberculosis IP31758, the causative agent of Far East scarlet-like fever.</title>
        <authorList>
            <person name="Eppinger M."/>
            <person name="Rosovitz M.J."/>
            <person name="Fricke W.F."/>
            <person name="Rasko D.A."/>
            <person name="Kokorina G."/>
            <person name="Fayolle C."/>
            <person name="Lindler L.E."/>
            <person name="Carniel E."/>
            <person name="Ravel J."/>
        </authorList>
    </citation>
    <scope>NUCLEOTIDE SEQUENCE [LARGE SCALE GENOMIC DNA]</scope>
    <source>
        <strain>IP 31758</strain>
    </source>
</reference>
<organism>
    <name type="scientific">Yersinia pseudotuberculosis serotype O:1b (strain IP 31758)</name>
    <dbReference type="NCBI Taxonomy" id="349747"/>
    <lineage>
        <taxon>Bacteria</taxon>
        <taxon>Pseudomonadati</taxon>
        <taxon>Pseudomonadota</taxon>
        <taxon>Gammaproteobacteria</taxon>
        <taxon>Enterobacterales</taxon>
        <taxon>Yersiniaceae</taxon>
        <taxon>Yersinia</taxon>
    </lineage>
</organism>
<accession>A7FCQ4</accession>
<keyword id="KW-0963">Cytoplasm</keyword>
<keyword id="KW-0378">Hydrolase</keyword>
<keyword id="KW-0694">RNA-binding</keyword>
<keyword id="KW-0820">tRNA-binding</keyword>
<protein>
    <recommendedName>
        <fullName evidence="1">D-aminoacyl-tRNA deacylase</fullName>
        <shortName evidence="1">DTD</shortName>
        <ecNumber evidence="1">3.1.1.96</ecNumber>
    </recommendedName>
    <alternativeName>
        <fullName evidence="1">Gly-tRNA(Ala) deacylase</fullName>
    </alternativeName>
</protein>
<sequence length="145" mass="15863">MIALIQRALSASVVVEGNIVGEIGPGLLVLLGVEQGDTEQKAQRLCERVLGYRIFSDENDKMNLNVQQAGGSVLVVSQFTLVADTQKGMRPSFSRGAIPQEADRLYQYFVAQCRERGVKTETGLFAADMKVSLVNDGPVTFWLQV</sequence>
<feature type="chain" id="PRO_1000060911" description="D-aminoacyl-tRNA deacylase">
    <location>
        <begin position="1"/>
        <end position="145"/>
    </location>
</feature>
<feature type="short sequence motif" description="Gly-cisPro motif, important for rejection of L-amino acids" evidence="1">
    <location>
        <begin position="137"/>
        <end position="138"/>
    </location>
</feature>
<name>DTD_YERP3</name>